<keyword id="KW-0963">Cytoplasm</keyword>
<keyword id="KW-0324">Glycolysis</keyword>
<keyword id="KW-0456">Lyase</keyword>
<keyword id="KW-0460">Magnesium</keyword>
<keyword id="KW-0479">Metal-binding</keyword>
<keyword id="KW-0964">Secreted</keyword>
<feature type="chain" id="PRO_0000266998" description="Enolase">
    <location>
        <begin position="1"/>
        <end position="430"/>
    </location>
</feature>
<feature type="active site" description="Proton donor" evidence="1">
    <location>
        <position position="205"/>
    </location>
</feature>
<feature type="active site" description="Proton acceptor" evidence="1">
    <location>
        <position position="340"/>
    </location>
</feature>
<feature type="binding site" evidence="1">
    <location>
        <position position="163"/>
    </location>
    <ligand>
        <name>(2R)-2-phosphoglycerate</name>
        <dbReference type="ChEBI" id="CHEBI:58289"/>
    </ligand>
</feature>
<feature type="binding site" evidence="1">
    <location>
        <position position="242"/>
    </location>
    <ligand>
        <name>Mg(2+)</name>
        <dbReference type="ChEBI" id="CHEBI:18420"/>
    </ligand>
</feature>
<feature type="binding site" evidence="1">
    <location>
        <position position="288"/>
    </location>
    <ligand>
        <name>Mg(2+)</name>
        <dbReference type="ChEBI" id="CHEBI:18420"/>
    </ligand>
</feature>
<feature type="binding site" evidence="1">
    <location>
        <position position="315"/>
    </location>
    <ligand>
        <name>Mg(2+)</name>
        <dbReference type="ChEBI" id="CHEBI:18420"/>
    </ligand>
</feature>
<feature type="binding site" evidence="1">
    <location>
        <position position="340"/>
    </location>
    <ligand>
        <name>(2R)-2-phosphoglycerate</name>
        <dbReference type="ChEBI" id="CHEBI:58289"/>
    </ligand>
</feature>
<feature type="binding site" evidence="1">
    <location>
        <position position="369"/>
    </location>
    <ligand>
        <name>(2R)-2-phosphoglycerate</name>
        <dbReference type="ChEBI" id="CHEBI:58289"/>
    </ligand>
</feature>
<feature type="binding site" evidence="1">
    <location>
        <position position="370"/>
    </location>
    <ligand>
        <name>(2R)-2-phosphoglycerate</name>
        <dbReference type="ChEBI" id="CHEBI:58289"/>
    </ligand>
</feature>
<feature type="binding site" evidence="1">
    <location>
        <position position="391"/>
    </location>
    <ligand>
        <name>(2R)-2-phosphoglycerate</name>
        <dbReference type="ChEBI" id="CHEBI:58289"/>
    </ligand>
</feature>
<reference key="1">
    <citation type="journal article" date="2006" name="J. Bacteriol.">
        <title>Living with genome instability: the adaptation of phytoplasmas to diverse environments of their insect and plant hosts.</title>
        <authorList>
            <person name="Bai X."/>
            <person name="Zhang J."/>
            <person name="Ewing A."/>
            <person name="Miller S.A."/>
            <person name="Jancso Radek A."/>
            <person name="Shevchenko D.V."/>
            <person name="Tsukerman K."/>
            <person name="Walunas T."/>
            <person name="Lapidus A."/>
            <person name="Campbell J.W."/>
            <person name="Hogenhout S.A."/>
        </authorList>
    </citation>
    <scope>NUCLEOTIDE SEQUENCE [LARGE SCALE GENOMIC DNA]</scope>
    <source>
        <strain>AYWB</strain>
    </source>
</reference>
<organism>
    <name type="scientific">Aster yellows witches'-broom phytoplasma (strain AYWB)</name>
    <dbReference type="NCBI Taxonomy" id="322098"/>
    <lineage>
        <taxon>Bacteria</taxon>
        <taxon>Bacillati</taxon>
        <taxon>Mycoplasmatota</taxon>
        <taxon>Mollicutes</taxon>
        <taxon>Acholeplasmatales</taxon>
        <taxon>Acholeplasmataceae</taxon>
        <taxon>Candidatus Phytoplasma</taxon>
        <taxon>16SrI (Aster yellows group)</taxon>
    </lineage>
</organism>
<name>ENO_AYWBP</name>
<gene>
    <name evidence="1" type="primary">eno</name>
    <name type="ordered locus">AYWB_437</name>
</gene>
<sequence>MPYIESILAREVLDSRGNPTVEVEVYTESGAFGKAIVPSGASTGQHESVELRDCDAKRFLGKGVLQAVKNVTEVIQPELEGYSVLEQTLIDKLLIKVDGTPNKSNLGANAILGVSLACAKAAANYLNLEFYQYVGGVWPKQMPVPMMNVINGGAHASNSVDFQEFMILPIGAPSFKEALRYGAEVFHHLGKILKQKGLPTTVGDEGGYAPDLNSNEEALQIILEAIKSAGYEPGKDIFLGMDVAASEFYDKKIQKYVLASENNKSFSSKELVHYYETLVAKYPIISIEDGLDENDWDGWKYLTQKLGNQIQLVGDDLFVTNTQKLAKGIENKIGNSILIKLNQIGTLTETLETIEMAKKASYTAVISHRSGETEDTTIADLAVATNSGQIKTGSCSRTDRIAKYNQLLRIEDQLVEAPFLGLKTFYNLKK</sequence>
<accession>Q2NJ39</accession>
<comment type="function">
    <text evidence="1">Catalyzes the reversible conversion of 2-phosphoglycerate (2-PG) into phosphoenolpyruvate (PEP). It is essential for the degradation of carbohydrates via glycolysis.</text>
</comment>
<comment type="catalytic activity">
    <reaction evidence="1">
        <text>(2R)-2-phosphoglycerate = phosphoenolpyruvate + H2O</text>
        <dbReference type="Rhea" id="RHEA:10164"/>
        <dbReference type="ChEBI" id="CHEBI:15377"/>
        <dbReference type="ChEBI" id="CHEBI:58289"/>
        <dbReference type="ChEBI" id="CHEBI:58702"/>
        <dbReference type="EC" id="4.2.1.11"/>
    </reaction>
</comment>
<comment type="cofactor">
    <cofactor evidence="1">
        <name>Mg(2+)</name>
        <dbReference type="ChEBI" id="CHEBI:18420"/>
    </cofactor>
    <text evidence="1">Binds a second Mg(2+) ion via substrate during catalysis.</text>
</comment>
<comment type="pathway">
    <text evidence="1">Carbohydrate degradation; glycolysis; pyruvate from D-glyceraldehyde 3-phosphate: step 4/5.</text>
</comment>
<comment type="subcellular location">
    <subcellularLocation>
        <location evidence="1">Cytoplasm</location>
    </subcellularLocation>
    <subcellularLocation>
        <location evidence="1">Secreted</location>
    </subcellularLocation>
    <subcellularLocation>
        <location evidence="1">Cell surface</location>
    </subcellularLocation>
    <text evidence="1">Fractions of enolase are present in both the cytoplasm and on the cell surface.</text>
</comment>
<comment type="similarity">
    <text evidence="1">Belongs to the enolase family.</text>
</comment>
<proteinExistence type="inferred from homology"/>
<dbReference type="EC" id="4.2.1.11" evidence="1"/>
<dbReference type="EMBL" id="CP000061">
    <property type="protein sequence ID" value="ABC65554.1"/>
    <property type="molecule type" value="Genomic_DNA"/>
</dbReference>
<dbReference type="RefSeq" id="WP_011412718.1">
    <property type="nucleotide sequence ID" value="NC_007716.1"/>
</dbReference>
<dbReference type="SMR" id="Q2NJ39"/>
<dbReference type="STRING" id="322098.AYWB_437"/>
<dbReference type="KEGG" id="ayw:AYWB_437"/>
<dbReference type="eggNOG" id="COG0148">
    <property type="taxonomic scope" value="Bacteria"/>
</dbReference>
<dbReference type="HOGENOM" id="CLU_031223_2_1_14"/>
<dbReference type="OrthoDB" id="9804716at2"/>
<dbReference type="PhylomeDB" id="Q2NJ39"/>
<dbReference type="UniPathway" id="UPA00109">
    <property type="reaction ID" value="UER00187"/>
</dbReference>
<dbReference type="Proteomes" id="UP000001934">
    <property type="component" value="Chromosome"/>
</dbReference>
<dbReference type="GO" id="GO:0009986">
    <property type="term" value="C:cell surface"/>
    <property type="evidence" value="ECO:0007669"/>
    <property type="project" value="UniProtKB-SubCell"/>
</dbReference>
<dbReference type="GO" id="GO:0005576">
    <property type="term" value="C:extracellular region"/>
    <property type="evidence" value="ECO:0007669"/>
    <property type="project" value="UniProtKB-SubCell"/>
</dbReference>
<dbReference type="GO" id="GO:0000015">
    <property type="term" value="C:phosphopyruvate hydratase complex"/>
    <property type="evidence" value="ECO:0007669"/>
    <property type="project" value="InterPro"/>
</dbReference>
<dbReference type="GO" id="GO:0000287">
    <property type="term" value="F:magnesium ion binding"/>
    <property type="evidence" value="ECO:0007669"/>
    <property type="project" value="UniProtKB-UniRule"/>
</dbReference>
<dbReference type="GO" id="GO:0004634">
    <property type="term" value="F:phosphopyruvate hydratase activity"/>
    <property type="evidence" value="ECO:0007669"/>
    <property type="project" value="UniProtKB-UniRule"/>
</dbReference>
<dbReference type="GO" id="GO:0006096">
    <property type="term" value="P:glycolytic process"/>
    <property type="evidence" value="ECO:0007669"/>
    <property type="project" value="UniProtKB-UniRule"/>
</dbReference>
<dbReference type="CDD" id="cd03313">
    <property type="entry name" value="enolase"/>
    <property type="match status" value="1"/>
</dbReference>
<dbReference type="FunFam" id="3.20.20.120:FF:000001">
    <property type="entry name" value="Enolase"/>
    <property type="match status" value="1"/>
</dbReference>
<dbReference type="FunFam" id="3.30.390.10:FF:000001">
    <property type="entry name" value="Enolase"/>
    <property type="match status" value="1"/>
</dbReference>
<dbReference type="Gene3D" id="3.20.20.120">
    <property type="entry name" value="Enolase-like C-terminal domain"/>
    <property type="match status" value="1"/>
</dbReference>
<dbReference type="Gene3D" id="3.30.390.10">
    <property type="entry name" value="Enolase-like, N-terminal domain"/>
    <property type="match status" value="1"/>
</dbReference>
<dbReference type="HAMAP" id="MF_00318">
    <property type="entry name" value="Enolase"/>
    <property type="match status" value="1"/>
</dbReference>
<dbReference type="InterPro" id="IPR000941">
    <property type="entry name" value="Enolase"/>
</dbReference>
<dbReference type="InterPro" id="IPR036849">
    <property type="entry name" value="Enolase-like_C_sf"/>
</dbReference>
<dbReference type="InterPro" id="IPR029017">
    <property type="entry name" value="Enolase-like_N"/>
</dbReference>
<dbReference type="InterPro" id="IPR020810">
    <property type="entry name" value="Enolase_C"/>
</dbReference>
<dbReference type="InterPro" id="IPR020809">
    <property type="entry name" value="Enolase_CS"/>
</dbReference>
<dbReference type="InterPro" id="IPR020811">
    <property type="entry name" value="Enolase_N"/>
</dbReference>
<dbReference type="NCBIfam" id="TIGR01060">
    <property type="entry name" value="eno"/>
    <property type="match status" value="1"/>
</dbReference>
<dbReference type="PANTHER" id="PTHR11902">
    <property type="entry name" value="ENOLASE"/>
    <property type="match status" value="1"/>
</dbReference>
<dbReference type="PANTHER" id="PTHR11902:SF1">
    <property type="entry name" value="ENOLASE"/>
    <property type="match status" value="1"/>
</dbReference>
<dbReference type="Pfam" id="PF00113">
    <property type="entry name" value="Enolase_C"/>
    <property type="match status" value="1"/>
</dbReference>
<dbReference type="Pfam" id="PF03952">
    <property type="entry name" value="Enolase_N"/>
    <property type="match status" value="1"/>
</dbReference>
<dbReference type="PIRSF" id="PIRSF001400">
    <property type="entry name" value="Enolase"/>
    <property type="match status" value="1"/>
</dbReference>
<dbReference type="PRINTS" id="PR00148">
    <property type="entry name" value="ENOLASE"/>
</dbReference>
<dbReference type="SFLD" id="SFLDS00001">
    <property type="entry name" value="Enolase"/>
    <property type="match status" value="1"/>
</dbReference>
<dbReference type="SFLD" id="SFLDF00002">
    <property type="entry name" value="enolase"/>
    <property type="match status" value="1"/>
</dbReference>
<dbReference type="SMART" id="SM01192">
    <property type="entry name" value="Enolase_C"/>
    <property type="match status" value="1"/>
</dbReference>
<dbReference type="SMART" id="SM01193">
    <property type="entry name" value="Enolase_N"/>
    <property type="match status" value="1"/>
</dbReference>
<dbReference type="SUPFAM" id="SSF51604">
    <property type="entry name" value="Enolase C-terminal domain-like"/>
    <property type="match status" value="1"/>
</dbReference>
<dbReference type="SUPFAM" id="SSF54826">
    <property type="entry name" value="Enolase N-terminal domain-like"/>
    <property type="match status" value="1"/>
</dbReference>
<dbReference type="PROSITE" id="PS00164">
    <property type="entry name" value="ENOLASE"/>
    <property type="match status" value="1"/>
</dbReference>
<evidence type="ECO:0000255" key="1">
    <source>
        <dbReference type="HAMAP-Rule" id="MF_00318"/>
    </source>
</evidence>
<protein>
    <recommendedName>
        <fullName evidence="1">Enolase</fullName>
        <ecNumber evidence="1">4.2.1.11</ecNumber>
    </recommendedName>
    <alternativeName>
        <fullName evidence="1">2-phospho-D-glycerate hydro-lyase</fullName>
    </alternativeName>
    <alternativeName>
        <fullName evidence="1">2-phosphoglycerate dehydratase</fullName>
    </alternativeName>
</protein>